<accession>Q3AIG9</accession>
<evidence type="ECO:0000255" key="1">
    <source>
        <dbReference type="HAMAP-Rule" id="MF_00651"/>
    </source>
</evidence>
<evidence type="ECO:0000256" key="2">
    <source>
        <dbReference type="SAM" id="MobiDB-lite"/>
    </source>
</evidence>
<organism>
    <name type="scientific">Synechococcus sp. (strain CC9605)</name>
    <dbReference type="NCBI Taxonomy" id="110662"/>
    <lineage>
        <taxon>Bacteria</taxon>
        <taxon>Bacillati</taxon>
        <taxon>Cyanobacteriota</taxon>
        <taxon>Cyanophyceae</taxon>
        <taxon>Synechococcales</taxon>
        <taxon>Synechococcaceae</taxon>
        <taxon>Synechococcus</taxon>
    </lineage>
</organism>
<feature type="chain" id="PRO_0000257605" description="Putative pre-16S rRNA nuclease">
    <location>
        <begin position="1"/>
        <end position="158"/>
    </location>
</feature>
<feature type="region of interest" description="Disordered" evidence="2">
    <location>
        <begin position="138"/>
        <end position="158"/>
    </location>
</feature>
<reference key="1">
    <citation type="submission" date="2005-07" db="EMBL/GenBank/DDBJ databases">
        <title>Complete sequence of Synechococcus sp. CC9605.</title>
        <authorList>
            <consortium name="US DOE Joint Genome Institute"/>
            <person name="Copeland A."/>
            <person name="Lucas S."/>
            <person name="Lapidus A."/>
            <person name="Barry K."/>
            <person name="Detter J.C."/>
            <person name="Glavina T."/>
            <person name="Hammon N."/>
            <person name="Israni S."/>
            <person name="Pitluck S."/>
            <person name="Schmutz J."/>
            <person name="Martinez M."/>
            <person name="Larimer F."/>
            <person name="Land M."/>
            <person name="Kyrpides N."/>
            <person name="Ivanova N."/>
            <person name="Richardson P."/>
        </authorList>
    </citation>
    <scope>NUCLEOTIDE SEQUENCE [LARGE SCALE GENOMIC DNA]</scope>
    <source>
        <strain>CC9605</strain>
    </source>
</reference>
<protein>
    <recommendedName>
        <fullName evidence="1">Putative pre-16S rRNA nuclease</fullName>
        <ecNumber evidence="1">3.1.-.-</ecNumber>
    </recommendedName>
</protein>
<keyword id="KW-0963">Cytoplasm</keyword>
<keyword id="KW-0378">Hydrolase</keyword>
<keyword id="KW-0540">Nuclease</keyword>
<keyword id="KW-0690">Ribosome biogenesis</keyword>
<gene>
    <name type="ordered locus">Syncc9605_1870</name>
</gene>
<comment type="function">
    <text evidence="1">Could be a nuclease involved in processing of the 5'-end of pre-16S rRNA.</text>
</comment>
<comment type="subcellular location">
    <subcellularLocation>
        <location evidence="1">Cytoplasm</location>
    </subcellularLocation>
</comment>
<comment type="similarity">
    <text evidence="1">Belongs to the YqgF nuclease family.</text>
</comment>
<sequence>MRPRPCSILSLDVGRRRIGLAGCDALGISVTPLAALRRGRFDADLVVLQAHCCERSVQGLVVGLPLDAAGQPTAQAEHCQRYGLRLAAALDLPLAWVNEHSSTWAAGEQFGLKGDRSGRLDSAAAALLLEQWLAEGPELKPAQQTASRSGAGAGDGGS</sequence>
<name>YQGF_SYNSC</name>
<proteinExistence type="inferred from homology"/>
<dbReference type="EC" id="3.1.-.-" evidence="1"/>
<dbReference type="EMBL" id="CP000110">
    <property type="protein sequence ID" value="ABB35613.1"/>
    <property type="molecule type" value="Genomic_DNA"/>
</dbReference>
<dbReference type="RefSeq" id="WP_011364822.1">
    <property type="nucleotide sequence ID" value="NC_007516.1"/>
</dbReference>
<dbReference type="SMR" id="Q3AIG9"/>
<dbReference type="STRING" id="110662.Syncc9605_1870"/>
<dbReference type="KEGG" id="syd:Syncc9605_1870"/>
<dbReference type="eggNOG" id="COG0816">
    <property type="taxonomic scope" value="Bacteria"/>
</dbReference>
<dbReference type="HOGENOM" id="CLU_098240_3_1_3"/>
<dbReference type="OrthoDB" id="9796140at2"/>
<dbReference type="GO" id="GO:0005829">
    <property type="term" value="C:cytosol"/>
    <property type="evidence" value="ECO:0007669"/>
    <property type="project" value="TreeGrafter"/>
</dbReference>
<dbReference type="GO" id="GO:0004518">
    <property type="term" value="F:nuclease activity"/>
    <property type="evidence" value="ECO:0007669"/>
    <property type="project" value="UniProtKB-KW"/>
</dbReference>
<dbReference type="GO" id="GO:0000967">
    <property type="term" value="P:rRNA 5'-end processing"/>
    <property type="evidence" value="ECO:0007669"/>
    <property type="project" value="UniProtKB-UniRule"/>
</dbReference>
<dbReference type="CDD" id="cd16964">
    <property type="entry name" value="YqgF"/>
    <property type="match status" value="1"/>
</dbReference>
<dbReference type="Gene3D" id="3.30.420.140">
    <property type="entry name" value="YqgF/RNase H-like domain"/>
    <property type="match status" value="1"/>
</dbReference>
<dbReference type="HAMAP" id="MF_00651">
    <property type="entry name" value="Nuclease_YqgF"/>
    <property type="match status" value="1"/>
</dbReference>
<dbReference type="InterPro" id="IPR012337">
    <property type="entry name" value="RNaseH-like_sf"/>
</dbReference>
<dbReference type="InterPro" id="IPR005227">
    <property type="entry name" value="YqgF"/>
</dbReference>
<dbReference type="InterPro" id="IPR006641">
    <property type="entry name" value="YqgF/RNaseH-like_dom"/>
</dbReference>
<dbReference type="InterPro" id="IPR037027">
    <property type="entry name" value="YqgF/RNaseH-like_dom_sf"/>
</dbReference>
<dbReference type="NCBIfam" id="TIGR00250">
    <property type="entry name" value="RNAse_H_YqgF"/>
    <property type="match status" value="1"/>
</dbReference>
<dbReference type="PANTHER" id="PTHR33317">
    <property type="entry name" value="POLYNUCLEOTIDYL TRANSFERASE, RIBONUCLEASE H-LIKE SUPERFAMILY PROTEIN"/>
    <property type="match status" value="1"/>
</dbReference>
<dbReference type="PANTHER" id="PTHR33317:SF4">
    <property type="entry name" value="POLYNUCLEOTIDYL TRANSFERASE, RIBONUCLEASE H-LIKE SUPERFAMILY PROTEIN"/>
    <property type="match status" value="1"/>
</dbReference>
<dbReference type="Pfam" id="PF03652">
    <property type="entry name" value="RuvX"/>
    <property type="match status" value="1"/>
</dbReference>
<dbReference type="SMART" id="SM00732">
    <property type="entry name" value="YqgFc"/>
    <property type="match status" value="1"/>
</dbReference>
<dbReference type="SUPFAM" id="SSF53098">
    <property type="entry name" value="Ribonuclease H-like"/>
    <property type="match status" value="1"/>
</dbReference>